<gene>
    <name type="primary">TSNARE1</name>
</gene>
<name>TSNA1_HUMAN</name>
<accession>Q96NA8</accession>
<accession>B7ZLB0</accession>
<accession>Q14D03</accession>
<organism>
    <name type="scientific">Homo sapiens</name>
    <name type="common">Human</name>
    <dbReference type="NCBI Taxonomy" id="9606"/>
    <lineage>
        <taxon>Eukaryota</taxon>
        <taxon>Metazoa</taxon>
        <taxon>Chordata</taxon>
        <taxon>Craniata</taxon>
        <taxon>Vertebrata</taxon>
        <taxon>Euteleostomi</taxon>
        <taxon>Mammalia</taxon>
        <taxon>Eutheria</taxon>
        <taxon>Euarchontoglires</taxon>
        <taxon>Primates</taxon>
        <taxon>Haplorrhini</taxon>
        <taxon>Catarrhini</taxon>
        <taxon>Hominidae</taxon>
        <taxon>Homo</taxon>
    </lineage>
</organism>
<protein>
    <recommendedName>
        <fullName>t-SNARE domain-containing protein 1</fullName>
    </recommendedName>
</protein>
<comment type="subcellular location">
    <subcellularLocation>
        <location evidence="1">Membrane</location>
        <topology evidence="1">Single-pass membrane protein</topology>
    </subcellularLocation>
</comment>
<comment type="alternative products">
    <event type="alternative splicing"/>
    <isoform>
        <id>Q96NA8-1</id>
        <name>1</name>
        <sequence type="displayed"/>
    </isoform>
    <isoform>
        <id>Q96NA8-2</id>
        <name>2</name>
        <sequence type="described" ref="VSP_056304"/>
    </isoform>
</comment>
<keyword id="KW-0025">Alternative splicing</keyword>
<keyword id="KW-0175">Coiled coil</keyword>
<keyword id="KW-0472">Membrane</keyword>
<keyword id="KW-0597">Phosphoprotein</keyword>
<keyword id="KW-1267">Proteomics identification</keyword>
<keyword id="KW-1185">Reference proteome</keyword>
<keyword id="KW-0812">Transmembrane</keyword>
<keyword id="KW-1133">Transmembrane helix</keyword>
<feature type="chain" id="PRO_0000065668" description="t-SNARE domain-containing protein 1">
    <location>
        <begin position="1"/>
        <end position="513"/>
    </location>
</feature>
<feature type="transmembrane region" description="Helical" evidence="2">
    <location>
        <begin position="491"/>
        <end position="511"/>
    </location>
</feature>
<feature type="domain" description="t-SNARE coiled-coil homology" evidence="3">
    <location>
        <begin position="416"/>
        <end position="478"/>
    </location>
</feature>
<feature type="region of interest" description="Disordered" evidence="4">
    <location>
        <begin position="1"/>
        <end position="23"/>
    </location>
</feature>
<feature type="region of interest" description="Disordered" evidence="4">
    <location>
        <begin position="49"/>
        <end position="128"/>
    </location>
</feature>
<feature type="compositionally biased region" description="Gly residues" evidence="4">
    <location>
        <begin position="7"/>
        <end position="19"/>
    </location>
</feature>
<feature type="modified residue" description="Phosphoserine" evidence="7">
    <location>
        <position position="378"/>
    </location>
</feature>
<feature type="splice variant" id="VSP_056304" description="In isoform 2." evidence="6">
    <location>
        <position position="329"/>
    </location>
</feature>
<feature type="sequence variant" id="VAR_055146" description="In dbSNP:rs7814359." evidence="5">
    <original>F</original>
    <variation>L</variation>
    <location>
        <position position="18"/>
    </location>
</feature>
<feature type="sequence variant" id="VAR_051461" description="In dbSNP:rs33970858." evidence="5">
    <original>R</original>
    <variation>P</variation>
    <location>
        <position position="55"/>
    </location>
</feature>
<feature type="sequence variant" id="VAR_051462" description="In dbSNP:rs10100935." evidence="5">
    <original>T</original>
    <variation>A</variation>
    <location>
        <position position="118"/>
    </location>
</feature>
<feature type="sequence variant" id="VAR_051463" description="In dbSNP:rs10435683.">
    <original>V</original>
    <variation>I</variation>
    <location>
        <position position="268"/>
    </location>
</feature>
<sequence length="513" mass="55949">MSYGSIARGGGLGSRGPFGGPSRQGCQPLECARCWTEYGIRHFPCPSPESKLQNRCVGKDGEGDLGPAGTPIVPRARKRGPGVAPEGSRMPEPTSSPTIGPRKDSAAGPHGRMAGPSTTRAKKRKPNFCPQETEVLVSKVSKHHQLLFGTGLLKAEPTRRYRVWSRILQAVNALGYCRRDVVDLKHKWRDLRAVVRRKLGDLRKAAHGPSPGSGKPQALALTPVEQVVAKTFSCQALPSEGFSLEPPRATQVDPCNLQELFQEMSANVFRINSSVTSLERSLQSLGTPSDTQELRDSLHTAQQETNKTIAASASSVKQMAELLRSSCPQERLQQERPQLDRLKTQLSDAIQCYGVVQKKIAEKSRALLPMAQRGSKQSPQAPFAELADDEKVFNGSDNMWQGQEQALLPDITEEDLEAIRLREEAILQMESNLLDVNQIIKDLASMVSEQGEAVDSIEASLEAASSHAEAARQLLAGASRHQLQRHKIKCCFLSAGVTALLVIIIIIATSVRK</sequence>
<evidence type="ECO:0000250" key="1"/>
<evidence type="ECO:0000255" key="2"/>
<evidence type="ECO:0000255" key="3">
    <source>
        <dbReference type="PROSITE-ProRule" id="PRU00202"/>
    </source>
</evidence>
<evidence type="ECO:0000256" key="4">
    <source>
        <dbReference type="SAM" id="MobiDB-lite"/>
    </source>
</evidence>
<evidence type="ECO:0000269" key="5">
    <source>
    </source>
</evidence>
<evidence type="ECO:0000303" key="6">
    <source>
    </source>
</evidence>
<evidence type="ECO:0007744" key="7">
    <source>
    </source>
</evidence>
<reference key="1">
    <citation type="journal article" date="2004" name="Nat. Genet.">
        <title>Complete sequencing and characterization of 21,243 full-length human cDNAs.</title>
        <authorList>
            <person name="Ota T."/>
            <person name="Suzuki Y."/>
            <person name="Nishikawa T."/>
            <person name="Otsuki T."/>
            <person name="Sugiyama T."/>
            <person name="Irie R."/>
            <person name="Wakamatsu A."/>
            <person name="Hayashi K."/>
            <person name="Sato H."/>
            <person name="Nagai K."/>
            <person name="Kimura K."/>
            <person name="Makita H."/>
            <person name="Sekine M."/>
            <person name="Obayashi M."/>
            <person name="Nishi T."/>
            <person name="Shibahara T."/>
            <person name="Tanaka T."/>
            <person name="Ishii S."/>
            <person name="Yamamoto J."/>
            <person name="Saito K."/>
            <person name="Kawai Y."/>
            <person name="Isono Y."/>
            <person name="Nakamura Y."/>
            <person name="Nagahari K."/>
            <person name="Murakami K."/>
            <person name="Yasuda T."/>
            <person name="Iwayanagi T."/>
            <person name="Wagatsuma M."/>
            <person name="Shiratori A."/>
            <person name="Sudo H."/>
            <person name="Hosoiri T."/>
            <person name="Kaku Y."/>
            <person name="Kodaira H."/>
            <person name="Kondo H."/>
            <person name="Sugawara M."/>
            <person name="Takahashi M."/>
            <person name="Kanda K."/>
            <person name="Yokoi T."/>
            <person name="Furuya T."/>
            <person name="Kikkawa E."/>
            <person name="Omura Y."/>
            <person name="Abe K."/>
            <person name="Kamihara K."/>
            <person name="Katsuta N."/>
            <person name="Sato K."/>
            <person name="Tanikawa M."/>
            <person name="Yamazaki M."/>
            <person name="Ninomiya K."/>
            <person name="Ishibashi T."/>
            <person name="Yamashita H."/>
            <person name="Murakawa K."/>
            <person name="Fujimori K."/>
            <person name="Tanai H."/>
            <person name="Kimata M."/>
            <person name="Watanabe M."/>
            <person name="Hiraoka S."/>
            <person name="Chiba Y."/>
            <person name="Ishida S."/>
            <person name="Ono Y."/>
            <person name="Takiguchi S."/>
            <person name="Watanabe S."/>
            <person name="Yosida M."/>
            <person name="Hotuta T."/>
            <person name="Kusano J."/>
            <person name="Kanehori K."/>
            <person name="Takahashi-Fujii A."/>
            <person name="Hara H."/>
            <person name="Tanase T.-O."/>
            <person name="Nomura Y."/>
            <person name="Togiya S."/>
            <person name="Komai F."/>
            <person name="Hara R."/>
            <person name="Takeuchi K."/>
            <person name="Arita M."/>
            <person name="Imose N."/>
            <person name="Musashino K."/>
            <person name="Yuuki H."/>
            <person name="Oshima A."/>
            <person name="Sasaki N."/>
            <person name="Aotsuka S."/>
            <person name="Yoshikawa Y."/>
            <person name="Matsunawa H."/>
            <person name="Ichihara T."/>
            <person name="Shiohata N."/>
            <person name="Sano S."/>
            <person name="Moriya S."/>
            <person name="Momiyama H."/>
            <person name="Satoh N."/>
            <person name="Takami S."/>
            <person name="Terashima Y."/>
            <person name="Suzuki O."/>
            <person name="Nakagawa S."/>
            <person name="Senoh A."/>
            <person name="Mizoguchi H."/>
            <person name="Goto Y."/>
            <person name="Shimizu F."/>
            <person name="Wakebe H."/>
            <person name="Hishigaki H."/>
            <person name="Watanabe T."/>
            <person name="Sugiyama A."/>
            <person name="Takemoto M."/>
            <person name="Kawakami B."/>
            <person name="Yamazaki M."/>
            <person name="Watanabe K."/>
            <person name="Kumagai A."/>
            <person name="Itakura S."/>
            <person name="Fukuzumi Y."/>
            <person name="Fujimori Y."/>
            <person name="Komiyama M."/>
            <person name="Tashiro H."/>
            <person name="Tanigami A."/>
            <person name="Fujiwara T."/>
            <person name="Ono T."/>
            <person name="Yamada K."/>
            <person name="Fujii Y."/>
            <person name="Ozaki K."/>
            <person name="Hirao M."/>
            <person name="Ohmori Y."/>
            <person name="Kawabata A."/>
            <person name="Hikiji T."/>
            <person name="Kobatake N."/>
            <person name="Inagaki H."/>
            <person name="Ikema Y."/>
            <person name="Okamoto S."/>
            <person name="Okitani R."/>
            <person name="Kawakami T."/>
            <person name="Noguchi S."/>
            <person name="Itoh T."/>
            <person name="Shigeta K."/>
            <person name="Senba T."/>
            <person name="Matsumura K."/>
            <person name="Nakajima Y."/>
            <person name="Mizuno T."/>
            <person name="Morinaga M."/>
            <person name="Sasaki M."/>
            <person name="Togashi T."/>
            <person name="Oyama M."/>
            <person name="Hata H."/>
            <person name="Watanabe M."/>
            <person name="Komatsu T."/>
            <person name="Mizushima-Sugano J."/>
            <person name="Satoh T."/>
            <person name="Shirai Y."/>
            <person name="Takahashi Y."/>
            <person name="Nakagawa K."/>
            <person name="Okumura K."/>
            <person name="Nagase T."/>
            <person name="Nomura N."/>
            <person name="Kikuchi H."/>
            <person name="Masuho Y."/>
            <person name="Yamashita R."/>
            <person name="Nakai K."/>
            <person name="Yada T."/>
            <person name="Nakamura Y."/>
            <person name="Ohara O."/>
            <person name="Isogai T."/>
            <person name="Sugano S."/>
        </authorList>
    </citation>
    <scope>NUCLEOTIDE SEQUENCE [LARGE SCALE MRNA] (ISOFORM 1)</scope>
    <scope>VARIANTS LEU-18; PRO-55 AND ALA-118</scope>
    <source>
        <tissue>Kidney</tissue>
    </source>
</reference>
<reference key="2">
    <citation type="journal article" date="2006" name="Nature">
        <title>DNA sequence and analysis of human chromosome 8.</title>
        <authorList>
            <person name="Nusbaum C."/>
            <person name="Mikkelsen T.S."/>
            <person name="Zody M.C."/>
            <person name="Asakawa S."/>
            <person name="Taudien S."/>
            <person name="Garber M."/>
            <person name="Kodira C.D."/>
            <person name="Schueler M.G."/>
            <person name="Shimizu A."/>
            <person name="Whittaker C.A."/>
            <person name="Chang J.L."/>
            <person name="Cuomo C.A."/>
            <person name="Dewar K."/>
            <person name="FitzGerald M.G."/>
            <person name="Yang X."/>
            <person name="Allen N.R."/>
            <person name="Anderson S."/>
            <person name="Asakawa T."/>
            <person name="Blechschmidt K."/>
            <person name="Bloom T."/>
            <person name="Borowsky M.L."/>
            <person name="Butler J."/>
            <person name="Cook A."/>
            <person name="Corum B."/>
            <person name="DeArellano K."/>
            <person name="DeCaprio D."/>
            <person name="Dooley K.T."/>
            <person name="Dorris L. III"/>
            <person name="Engels R."/>
            <person name="Gloeckner G."/>
            <person name="Hafez N."/>
            <person name="Hagopian D.S."/>
            <person name="Hall J.L."/>
            <person name="Ishikawa S.K."/>
            <person name="Jaffe D.B."/>
            <person name="Kamat A."/>
            <person name="Kudoh J."/>
            <person name="Lehmann R."/>
            <person name="Lokitsang T."/>
            <person name="Macdonald P."/>
            <person name="Major J.E."/>
            <person name="Matthews C.D."/>
            <person name="Mauceli E."/>
            <person name="Menzel U."/>
            <person name="Mihalev A.H."/>
            <person name="Minoshima S."/>
            <person name="Murayama Y."/>
            <person name="Naylor J.W."/>
            <person name="Nicol R."/>
            <person name="Nguyen C."/>
            <person name="O'Leary S.B."/>
            <person name="O'Neill K."/>
            <person name="Parker S.C.J."/>
            <person name="Polley A."/>
            <person name="Raymond C.K."/>
            <person name="Reichwald K."/>
            <person name="Rodriguez J."/>
            <person name="Sasaki T."/>
            <person name="Schilhabel M."/>
            <person name="Siddiqui R."/>
            <person name="Smith C.L."/>
            <person name="Sneddon T.P."/>
            <person name="Talamas J.A."/>
            <person name="Tenzin P."/>
            <person name="Topham K."/>
            <person name="Venkataraman V."/>
            <person name="Wen G."/>
            <person name="Yamazaki S."/>
            <person name="Young S.K."/>
            <person name="Zeng Q."/>
            <person name="Zimmer A.R."/>
            <person name="Rosenthal A."/>
            <person name="Birren B.W."/>
            <person name="Platzer M."/>
            <person name="Shimizu N."/>
            <person name="Lander E.S."/>
        </authorList>
    </citation>
    <scope>NUCLEOTIDE SEQUENCE [LARGE SCALE GENOMIC DNA]</scope>
</reference>
<reference key="3">
    <citation type="journal article" date="2004" name="Genome Res.">
        <title>The status, quality, and expansion of the NIH full-length cDNA project: the Mammalian Gene Collection (MGC).</title>
        <authorList>
            <consortium name="The MGC Project Team"/>
        </authorList>
    </citation>
    <scope>NUCLEOTIDE SEQUENCE [LARGE SCALE MRNA] (ISOFORMS 1 AND 2)</scope>
    <source>
        <tissue>Brain</tissue>
    </source>
</reference>
<reference key="4">
    <citation type="journal article" date="2013" name="J. Proteome Res.">
        <title>Toward a comprehensive characterization of a human cancer cell phosphoproteome.</title>
        <authorList>
            <person name="Zhou H."/>
            <person name="Di Palma S."/>
            <person name="Preisinger C."/>
            <person name="Peng M."/>
            <person name="Polat A.N."/>
            <person name="Heck A.J."/>
            <person name="Mohammed S."/>
        </authorList>
    </citation>
    <scope>PHOSPHORYLATION [LARGE SCALE ANALYSIS] AT SER-378</scope>
    <scope>IDENTIFICATION BY MASS SPECTROMETRY [LARGE SCALE ANALYSIS]</scope>
    <source>
        <tissue>Erythroleukemia</tissue>
    </source>
</reference>
<proteinExistence type="evidence at protein level"/>
<dbReference type="EMBL" id="AK055726">
    <property type="protein sequence ID" value="BAB70997.1"/>
    <property type="molecule type" value="mRNA"/>
</dbReference>
<dbReference type="EMBL" id="AC103758">
    <property type="status" value="NOT_ANNOTATED_CDS"/>
    <property type="molecule type" value="Genomic_DNA"/>
</dbReference>
<dbReference type="EMBL" id="AC129918">
    <property type="status" value="NOT_ANNOTATED_CDS"/>
    <property type="molecule type" value="Genomic_DNA"/>
</dbReference>
<dbReference type="EMBL" id="AC134682">
    <property type="status" value="NOT_ANNOTATED_CDS"/>
    <property type="molecule type" value="Genomic_DNA"/>
</dbReference>
<dbReference type="EMBL" id="BC113556">
    <property type="protein sequence ID" value="AAI13557.1"/>
    <property type="molecule type" value="mRNA"/>
</dbReference>
<dbReference type="EMBL" id="BC143684">
    <property type="protein sequence ID" value="AAI43685.1"/>
    <property type="molecule type" value="mRNA"/>
</dbReference>
<dbReference type="CCDS" id="CCDS6384.1">
    <molecule id="Q96NA8-1"/>
</dbReference>
<dbReference type="RefSeq" id="NP_001353830.1">
    <molecule id="Q96NA8-2"/>
    <property type="nucleotide sequence ID" value="NM_001366901.1"/>
</dbReference>
<dbReference type="RefSeq" id="NP_659440.2">
    <molecule id="Q96NA8-1"/>
    <property type="nucleotide sequence ID" value="NM_145003.5"/>
</dbReference>
<dbReference type="RefSeq" id="XP_016868667.1">
    <property type="nucleotide sequence ID" value="XM_017013178.1"/>
</dbReference>
<dbReference type="SMR" id="Q96NA8"/>
<dbReference type="BioGRID" id="128443">
    <property type="interactions" value="39"/>
</dbReference>
<dbReference type="FunCoup" id="Q96NA8">
    <property type="interactions" value="88"/>
</dbReference>
<dbReference type="IntAct" id="Q96NA8">
    <property type="interactions" value="8"/>
</dbReference>
<dbReference type="STRING" id="9606.ENSP00000303437"/>
<dbReference type="iPTMnet" id="Q96NA8"/>
<dbReference type="PhosphoSitePlus" id="Q96NA8"/>
<dbReference type="BioMuta" id="TSNARE1"/>
<dbReference type="DMDM" id="229462801"/>
<dbReference type="jPOST" id="Q96NA8"/>
<dbReference type="MassIVE" id="Q96NA8"/>
<dbReference type="PaxDb" id="9606-ENSP00000303437"/>
<dbReference type="PeptideAtlas" id="Q96NA8"/>
<dbReference type="ProteomicsDB" id="7219"/>
<dbReference type="ProteomicsDB" id="77496">
    <molecule id="Q96NA8-1"/>
</dbReference>
<dbReference type="Antibodypedia" id="14519">
    <property type="antibodies" value="85 antibodies from 14 providers"/>
</dbReference>
<dbReference type="DNASU" id="203062"/>
<dbReference type="Ensembl" id="ENST00000524325.6">
    <molecule id="Q96NA8-1"/>
    <property type="protein sequence ID" value="ENSP00000428763.2"/>
    <property type="gene ID" value="ENSG00000171045.16"/>
</dbReference>
<dbReference type="GeneID" id="203062"/>
<dbReference type="KEGG" id="hsa:203062"/>
<dbReference type="MANE-Select" id="ENST00000524325.6">
    <property type="protein sequence ID" value="ENSP00000428763.2"/>
    <property type="RefSeq nucleotide sequence ID" value="NM_145003.5"/>
    <property type="RefSeq protein sequence ID" value="NP_659440.2"/>
</dbReference>
<dbReference type="UCSC" id="uc003ywk.4">
    <molecule id="Q96NA8-1"/>
    <property type="organism name" value="human"/>
</dbReference>
<dbReference type="AGR" id="HGNC:26437"/>
<dbReference type="CTD" id="203062"/>
<dbReference type="DisGeNET" id="203062"/>
<dbReference type="GeneCards" id="TSNARE1"/>
<dbReference type="HGNC" id="HGNC:26437">
    <property type="gene designation" value="TSNARE1"/>
</dbReference>
<dbReference type="HPA" id="ENSG00000171045">
    <property type="expression patterns" value="Low tissue specificity"/>
</dbReference>
<dbReference type="MIM" id="620986">
    <property type="type" value="gene"/>
</dbReference>
<dbReference type="neXtProt" id="NX_Q96NA8"/>
<dbReference type="OpenTargets" id="ENSG00000171045"/>
<dbReference type="PharmGKB" id="PA142670693"/>
<dbReference type="VEuPathDB" id="HostDB:ENSG00000171045"/>
<dbReference type="eggNOG" id="KOG0811">
    <property type="taxonomic scope" value="Eukaryota"/>
</dbReference>
<dbReference type="GeneTree" id="ENSGT01000000214440"/>
<dbReference type="InParanoid" id="Q96NA8"/>
<dbReference type="OMA" id="VWQSQEQ"/>
<dbReference type="OrthoDB" id="75754at2759"/>
<dbReference type="PAN-GO" id="Q96NA8">
    <property type="GO annotations" value="8 GO annotations based on evolutionary models"/>
</dbReference>
<dbReference type="PhylomeDB" id="Q96NA8"/>
<dbReference type="TreeFam" id="TF335542"/>
<dbReference type="PathwayCommons" id="Q96NA8"/>
<dbReference type="SignaLink" id="Q96NA8"/>
<dbReference type="BioGRID-ORCS" id="203062">
    <property type="hits" value="10 hits in 1156 CRISPR screens"/>
</dbReference>
<dbReference type="ChiTaRS" id="TSNARE1">
    <property type="organism name" value="human"/>
</dbReference>
<dbReference type="GenomeRNAi" id="203062"/>
<dbReference type="Pharos" id="Q96NA8">
    <property type="development level" value="Tbio"/>
</dbReference>
<dbReference type="PRO" id="PR:Q96NA8"/>
<dbReference type="Proteomes" id="UP000005640">
    <property type="component" value="Chromosome 8"/>
</dbReference>
<dbReference type="RNAct" id="Q96NA8">
    <property type="molecule type" value="protein"/>
</dbReference>
<dbReference type="Bgee" id="ENSG00000171045">
    <property type="expression patterns" value="Expressed in skin of abdomen and 122 other cell types or tissues"/>
</dbReference>
<dbReference type="ExpressionAtlas" id="Q96NA8">
    <property type="expression patterns" value="baseline and differential"/>
</dbReference>
<dbReference type="GO" id="GO:0012505">
    <property type="term" value="C:endomembrane system"/>
    <property type="evidence" value="ECO:0000318"/>
    <property type="project" value="GO_Central"/>
</dbReference>
<dbReference type="GO" id="GO:0031201">
    <property type="term" value="C:SNARE complex"/>
    <property type="evidence" value="ECO:0000318"/>
    <property type="project" value="GO_Central"/>
</dbReference>
<dbReference type="GO" id="GO:0008021">
    <property type="term" value="C:synaptic vesicle"/>
    <property type="evidence" value="ECO:0000318"/>
    <property type="project" value="GO_Central"/>
</dbReference>
<dbReference type="GO" id="GO:0005484">
    <property type="term" value="F:SNAP receptor activity"/>
    <property type="evidence" value="ECO:0000318"/>
    <property type="project" value="GO_Central"/>
</dbReference>
<dbReference type="GO" id="GO:0000149">
    <property type="term" value="F:SNARE binding"/>
    <property type="evidence" value="ECO:0000318"/>
    <property type="project" value="GO_Central"/>
</dbReference>
<dbReference type="GO" id="GO:0006886">
    <property type="term" value="P:intracellular protein transport"/>
    <property type="evidence" value="ECO:0000318"/>
    <property type="project" value="GO_Central"/>
</dbReference>
<dbReference type="GO" id="GO:0048278">
    <property type="term" value="P:vesicle docking"/>
    <property type="evidence" value="ECO:0000318"/>
    <property type="project" value="GO_Central"/>
</dbReference>
<dbReference type="GO" id="GO:0006906">
    <property type="term" value="P:vesicle fusion"/>
    <property type="evidence" value="ECO:0000318"/>
    <property type="project" value="GO_Central"/>
</dbReference>
<dbReference type="CDD" id="cd15877">
    <property type="entry name" value="SNARE_TSNARE1"/>
    <property type="match status" value="1"/>
</dbReference>
<dbReference type="FunFam" id="1.20.5.110:FF:000073">
    <property type="entry name" value="t-SNARE domain containing 1"/>
    <property type="match status" value="1"/>
</dbReference>
<dbReference type="FunFam" id="1.20.58.70:FF:000014">
    <property type="entry name" value="t-SNARE domain containing 1"/>
    <property type="match status" value="1"/>
</dbReference>
<dbReference type="Gene3D" id="1.20.5.110">
    <property type="match status" value="1"/>
</dbReference>
<dbReference type="Gene3D" id="1.20.58.70">
    <property type="match status" value="1"/>
</dbReference>
<dbReference type="InterPro" id="IPR028002">
    <property type="entry name" value="Myb_DNA-bind_5"/>
</dbReference>
<dbReference type="InterPro" id="IPR010989">
    <property type="entry name" value="SNARE"/>
</dbReference>
<dbReference type="InterPro" id="IPR006011">
    <property type="entry name" value="Syntaxin_N"/>
</dbReference>
<dbReference type="InterPro" id="IPR000727">
    <property type="entry name" value="T_SNARE_dom"/>
</dbReference>
<dbReference type="PANTHER" id="PTHR23098">
    <property type="entry name" value="AGAP001331-PA-RELATED"/>
    <property type="match status" value="1"/>
</dbReference>
<dbReference type="PANTHER" id="PTHR23098:SF22">
    <property type="entry name" value="MYB-LIKE DOMAIN-CONTAINING PROTEIN"/>
    <property type="match status" value="1"/>
</dbReference>
<dbReference type="Pfam" id="PF13873">
    <property type="entry name" value="Myb_DNA-bind_5"/>
    <property type="match status" value="1"/>
</dbReference>
<dbReference type="Pfam" id="PF05739">
    <property type="entry name" value="SNARE"/>
    <property type="match status" value="1"/>
</dbReference>
<dbReference type="Pfam" id="PF14523">
    <property type="entry name" value="Syntaxin_2"/>
    <property type="match status" value="1"/>
</dbReference>
<dbReference type="SMART" id="SM00503">
    <property type="entry name" value="SynN"/>
    <property type="match status" value="1"/>
</dbReference>
<dbReference type="SMART" id="SM00397">
    <property type="entry name" value="t_SNARE"/>
    <property type="match status" value="1"/>
</dbReference>
<dbReference type="SUPFAM" id="SSF47661">
    <property type="entry name" value="t-snare proteins"/>
    <property type="match status" value="1"/>
</dbReference>
<dbReference type="PROSITE" id="PS50192">
    <property type="entry name" value="T_SNARE"/>
    <property type="match status" value="1"/>
</dbReference>